<name>EFG_RICAE</name>
<sequence>MSKINKLEHIRNIGICAHIDAGKTTTTERILYYTGKSHKIGEVHEGGATMDWMEQEQERGITITSAATTCRWQDKIINIIDTPGHVDFTIEVERSLRVLDGAVAVFDGVAGVEPQSETVWRQADKYNVPRMCFVNKMDRMGADFYRCVEMLKDRLGAKPLVIQLPVGIEENFKGIIDLIKMKAVIWKDEALGAEYFEEDIPADMKDKAEEYRAKLLDMVVELDDHVMEKYLSGEEVTAEEIKRLIRKGTISAAFYPVLCGSAFKNKGVQPLLDAVVDFLPSPIDIGIVKGMEVSTGEEKDFPISVTEPFAALAFKIMNDPFVGSLTFIRIYSGKIISGTTVINTVKNKREKIGRMLLMHANNREDIKEASAGDIVALAGLKDTTTGDTLSDIDQQVILERMEFPEPVIELAVEPKSTADQEKMGLALSRLAAEDPSFRVSTDYETGQTVIKGMGELHLEILIDRMRREFKVEANIGAPQVAYRETITKVCEIDYTHKKQSGGAGQFARVKIIFEPLKEVKDLKDEDKNKIFVFESKIVGGAVPKEYIPGVEKGLNNIRETGVIAGYPMIDFKATLVDGAFHDVDSSVLAFEIAAKAAFREGMPKGNPKLLEPIMQVEVITPDEYMGDIIGDLNSRRGQIQSMDPRGNAQVVTANVPLAEMFGYVNTLRSLSQGRAQFSMIFSHYDQVPSQVADIIKAKK</sequence>
<accession>C3PMH0</accession>
<reference key="1">
    <citation type="journal article" date="2009" name="BMC Genomics">
        <title>Analysis of the Rickettsia africae genome reveals that virulence acquisition in Rickettsia species may be explained by genome reduction.</title>
        <authorList>
            <person name="Fournier P.-E."/>
            <person name="El Karkouri K."/>
            <person name="Leroy Q."/>
            <person name="Robert C."/>
            <person name="Giumelli B."/>
            <person name="Renesto P."/>
            <person name="Socolovschi C."/>
            <person name="Parola P."/>
            <person name="Audic S."/>
            <person name="Raoult D."/>
        </authorList>
    </citation>
    <scope>NUCLEOTIDE SEQUENCE [LARGE SCALE GENOMIC DNA]</scope>
    <source>
        <strain>ESF-5</strain>
    </source>
</reference>
<protein>
    <recommendedName>
        <fullName evidence="1">Elongation factor G</fullName>
        <shortName evidence="1">EF-G</shortName>
    </recommendedName>
</protein>
<gene>
    <name evidence="1" type="primary">fusA</name>
    <name type="ordered locus">RAF_ORF0163</name>
</gene>
<evidence type="ECO:0000255" key="1">
    <source>
        <dbReference type="HAMAP-Rule" id="MF_00054"/>
    </source>
</evidence>
<proteinExistence type="inferred from homology"/>
<dbReference type="EMBL" id="CP001612">
    <property type="protein sequence ID" value="ACP53130.1"/>
    <property type="molecule type" value="Genomic_DNA"/>
</dbReference>
<dbReference type="RefSeq" id="WP_012719409.1">
    <property type="nucleotide sequence ID" value="NC_012633.1"/>
</dbReference>
<dbReference type="SMR" id="C3PMH0"/>
<dbReference type="KEGG" id="raf:RAF_ORF0163"/>
<dbReference type="HOGENOM" id="CLU_002794_4_1_5"/>
<dbReference type="Proteomes" id="UP000002305">
    <property type="component" value="Chromosome"/>
</dbReference>
<dbReference type="GO" id="GO:0005737">
    <property type="term" value="C:cytoplasm"/>
    <property type="evidence" value="ECO:0007669"/>
    <property type="project" value="UniProtKB-SubCell"/>
</dbReference>
<dbReference type="GO" id="GO:0005525">
    <property type="term" value="F:GTP binding"/>
    <property type="evidence" value="ECO:0007669"/>
    <property type="project" value="UniProtKB-UniRule"/>
</dbReference>
<dbReference type="GO" id="GO:0003924">
    <property type="term" value="F:GTPase activity"/>
    <property type="evidence" value="ECO:0007669"/>
    <property type="project" value="InterPro"/>
</dbReference>
<dbReference type="GO" id="GO:0003746">
    <property type="term" value="F:translation elongation factor activity"/>
    <property type="evidence" value="ECO:0007669"/>
    <property type="project" value="UniProtKB-UniRule"/>
</dbReference>
<dbReference type="GO" id="GO:0032790">
    <property type="term" value="P:ribosome disassembly"/>
    <property type="evidence" value="ECO:0007669"/>
    <property type="project" value="TreeGrafter"/>
</dbReference>
<dbReference type="CDD" id="cd01886">
    <property type="entry name" value="EF-G"/>
    <property type="match status" value="1"/>
</dbReference>
<dbReference type="CDD" id="cd16262">
    <property type="entry name" value="EFG_III"/>
    <property type="match status" value="1"/>
</dbReference>
<dbReference type="CDD" id="cd01434">
    <property type="entry name" value="EFG_mtEFG1_IV"/>
    <property type="match status" value="1"/>
</dbReference>
<dbReference type="CDD" id="cd03713">
    <property type="entry name" value="EFG_mtEFG_C"/>
    <property type="match status" value="1"/>
</dbReference>
<dbReference type="CDD" id="cd04088">
    <property type="entry name" value="EFG_mtEFG_II"/>
    <property type="match status" value="1"/>
</dbReference>
<dbReference type="FunFam" id="2.40.30.10:FF:000006">
    <property type="entry name" value="Elongation factor G"/>
    <property type="match status" value="1"/>
</dbReference>
<dbReference type="FunFam" id="3.30.230.10:FF:000003">
    <property type="entry name" value="Elongation factor G"/>
    <property type="match status" value="1"/>
</dbReference>
<dbReference type="FunFam" id="3.30.70.240:FF:000001">
    <property type="entry name" value="Elongation factor G"/>
    <property type="match status" value="1"/>
</dbReference>
<dbReference type="FunFam" id="3.30.70.870:FF:000001">
    <property type="entry name" value="Elongation factor G"/>
    <property type="match status" value="1"/>
</dbReference>
<dbReference type="FunFam" id="3.40.50.300:FF:000029">
    <property type="entry name" value="Elongation factor G"/>
    <property type="match status" value="1"/>
</dbReference>
<dbReference type="Gene3D" id="3.30.230.10">
    <property type="match status" value="1"/>
</dbReference>
<dbReference type="Gene3D" id="3.30.70.240">
    <property type="match status" value="1"/>
</dbReference>
<dbReference type="Gene3D" id="3.30.70.870">
    <property type="entry name" value="Elongation Factor G (Translational Gtpase), domain 3"/>
    <property type="match status" value="1"/>
</dbReference>
<dbReference type="Gene3D" id="3.40.50.300">
    <property type="entry name" value="P-loop containing nucleotide triphosphate hydrolases"/>
    <property type="match status" value="1"/>
</dbReference>
<dbReference type="Gene3D" id="2.40.30.10">
    <property type="entry name" value="Translation factors"/>
    <property type="match status" value="1"/>
</dbReference>
<dbReference type="HAMAP" id="MF_00054_B">
    <property type="entry name" value="EF_G_EF_2_B"/>
    <property type="match status" value="1"/>
</dbReference>
<dbReference type="InterPro" id="IPR053905">
    <property type="entry name" value="EF-G-like_DII"/>
</dbReference>
<dbReference type="InterPro" id="IPR041095">
    <property type="entry name" value="EFG_II"/>
</dbReference>
<dbReference type="InterPro" id="IPR009022">
    <property type="entry name" value="EFG_III"/>
</dbReference>
<dbReference type="InterPro" id="IPR035647">
    <property type="entry name" value="EFG_III/V"/>
</dbReference>
<dbReference type="InterPro" id="IPR047872">
    <property type="entry name" value="EFG_IV"/>
</dbReference>
<dbReference type="InterPro" id="IPR035649">
    <property type="entry name" value="EFG_V"/>
</dbReference>
<dbReference type="InterPro" id="IPR000640">
    <property type="entry name" value="EFG_V-like"/>
</dbReference>
<dbReference type="InterPro" id="IPR031157">
    <property type="entry name" value="G_TR_CS"/>
</dbReference>
<dbReference type="InterPro" id="IPR027417">
    <property type="entry name" value="P-loop_NTPase"/>
</dbReference>
<dbReference type="InterPro" id="IPR020568">
    <property type="entry name" value="Ribosomal_Su5_D2-typ_SF"/>
</dbReference>
<dbReference type="InterPro" id="IPR014721">
    <property type="entry name" value="Ribsml_uS5_D2-typ_fold_subgr"/>
</dbReference>
<dbReference type="InterPro" id="IPR005225">
    <property type="entry name" value="Small_GTP-bd"/>
</dbReference>
<dbReference type="InterPro" id="IPR000795">
    <property type="entry name" value="T_Tr_GTP-bd_dom"/>
</dbReference>
<dbReference type="InterPro" id="IPR009000">
    <property type="entry name" value="Transl_B-barrel_sf"/>
</dbReference>
<dbReference type="InterPro" id="IPR004540">
    <property type="entry name" value="Transl_elong_EFG/EF2"/>
</dbReference>
<dbReference type="InterPro" id="IPR005517">
    <property type="entry name" value="Transl_elong_EFG/EF2_IV"/>
</dbReference>
<dbReference type="NCBIfam" id="TIGR00484">
    <property type="entry name" value="EF-G"/>
    <property type="match status" value="1"/>
</dbReference>
<dbReference type="NCBIfam" id="NF009381">
    <property type="entry name" value="PRK12740.1-5"/>
    <property type="match status" value="1"/>
</dbReference>
<dbReference type="NCBIfam" id="TIGR00231">
    <property type="entry name" value="small_GTP"/>
    <property type="match status" value="1"/>
</dbReference>
<dbReference type="PANTHER" id="PTHR43261:SF1">
    <property type="entry name" value="RIBOSOME-RELEASING FACTOR 2, MITOCHONDRIAL"/>
    <property type="match status" value="1"/>
</dbReference>
<dbReference type="PANTHER" id="PTHR43261">
    <property type="entry name" value="TRANSLATION ELONGATION FACTOR G-RELATED"/>
    <property type="match status" value="1"/>
</dbReference>
<dbReference type="Pfam" id="PF22042">
    <property type="entry name" value="EF-G_D2"/>
    <property type="match status" value="1"/>
</dbReference>
<dbReference type="Pfam" id="PF00679">
    <property type="entry name" value="EFG_C"/>
    <property type="match status" value="1"/>
</dbReference>
<dbReference type="Pfam" id="PF14492">
    <property type="entry name" value="EFG_III"/>
    <property type="match status" value="1"/>
</dbReference>
<dbReference type="Pfam" id="PF03764">
    <property type="entry name" value="EFG_IV"/>
    <property type="match status" value="1"/>
</dbReference>
<dbReference type="Pfam" id="PF00009">
    <property type="entry name" value="GTP_EFTU"/>
    <property type="match status" value="1"/>
</dbReference>
<dbReference type="PRINTS" id="PR00315">
    <property type="entry name" value="ELONGATNFCT"/>
</dbReference>
<dbReference type="SMART" id="SM00838">
    <property type="entry name" value="EFG_C"/>
    <property type="match status" value="1"/>
</dbReference>
<dbReference type="SMART" id="SM00889">
    <property type="entry name" value="EFG_IV"/>
    <property type="match status" value="1"/>
</dbReference>
<dbReference type="SUPFAM" id="SSF54980">
    <property type="entry name" value="EF-G C-terminal domain-like"/>
    <property type="match status" value="2"/>
</dbReference>
<dbReference type="SUPFAM" id="SSF52540">
    <property type="entry name" value="P-loop containing nucleoside triphosphate hydrolases"/>
    <property type="match status" value="1"/>
</dbReference>
<dbReference type="SUPFAM" id="SSF54211">
    <property type="entry name" value="Ribosomal protein S5 domain 2-like"/>
    <property type="match status" value="1"/>
</dbReference>
<dbReference type="SUPFAM" id="SSF50447">
    <property type="entry name" value="Translation proteins"/>
    <property type="match status" value="1"/>
</dbReference>
<dbReference type="PROSITE" id="PS00301">
    <property type="entry name" value="G_TR_1"/>
    <property type="match status" value="1"/>
</dbReference>
<dbReference type="PROSITE" id="PS51722">
    <property type="entry name" value="G_TR_2"/>
    <property type="match status" value="1"/>
</dbReference>
<organism>
    <name type="scientific">Rickettsia africae (strain ESF-5)</name>
    <dbReference type="NCBI Taxonomy" id="347255"/>
    <lineage>
        <taxon>Bacteria</taxon>
        <taxon>Pseudomonadati</taxon>
        <taxon>Pseudomonadota</taxon>
        <taxon>Alphaproteobacteria</taxon>
        <taxon>Rickettsiales</taxon>
        <taxon>Rickettsiaceae</taxon>
        <taxon>Rickettsieae</taxon>
        <taxon>Rickettsia</taxon>
        <taxon>spotted fever group</taxon>
    </lineage>
</organism>
<comment type="function">
    <text evidence="1">Catalyzes the GTP-dependent ribosomal translocation step during translation elongation. During this step, the ribosome changes from the pre-translocational (PRE) to the post-translocational (POST) state as the newly formed A-site-bound peptidyl-tRNA and P-site-bound deacylated tRNA move to the P and E sites, respectively. Catalyzes the coordinated movement of the two tRNA molecules, the mRNA and conformational changes in the ribosome.</text>
</comment>
<comment type="subcellular location">
    <subcellularLocation>
        <location evidence="1">Cytoplasm</location>
    </subcellularLocation>
</comment>
<comment type="similarity">
    <text evidence="1">Belongs to the TRAFAC class translation factor GTPase superfamily. Classic translation factor GTPase family. EF-G/EF-2 subfamily.</text>
</comment>
<keyword id="KW-0963">Cytoplasm</keyword>
<keyword id="KW-0251">Elongation factor</keyword>
<keyword id="KW-0342">GTP-binding</keyword>
<keyword id="KW-0547">Nucleotide-binding</keyword>
<keyword id="KW-0648">Protein biosynthesis</keyword>
<feature type="chain" id="PRO_1000202310" description="Elongation factor G">
    <location>
        <begin position="1"/>
        <end position="699"/>
    </location>
</feature>
<feature type="domain" description="tr-type G">
    <location>
        <begin position="8"/>
        <end position="283"/>
    </location>
</feature>
<feature type="binding site" evidence="1">
    <location>
        <begin position="17"/>
        <end position="24"/>
    </location>
    <ligand>
        <name>GTP</name>
        <dbReference type="ChEBI" id="CHEBI:37565"/>
    </ligand>
</feature>
<feature type="binding site" evidence="1">
    <location>
        <begin position="81"/>
        <end position="85"/>
    </location>
    <ligand>
        <name>GTP</name>
        <dbReference type="ChEBI" id="CHEBI:37565"/>
    </ligand>
</feature>
<feature type="binding site" evidence="1">
    <location>
        <begin position="135"/>
        <end position="138"/>
    </location>
    <ligand>
        <name>GTP</name>
        <dbReference type="ChEBI" id="CHEBI:37565"/>
    </ligand>
</feature>